<accession>A0AZQ0</accession>
<keyword id="KW-0413">Isomerase</keyword>
<proteinExistence type="inferred from homology"/>
<evidence type="ECO:0000250" key="1"/>
<evidence type="ECO:0000250" key="2">
    <source>
        <dbReference type="UniProtKB" id="Q4KGU2"/>
    </source>
</evidence>
<evidence type="ECO:0000305" key="3"/>
<comment type="function">
    <text evidence="1">Allows intracellular utilization of 4-hydroxyproline, one of the major constituents of host collagen, by converting 4-hydroxy-L-proline to 4-hydroxy-D-proline, which can be further metabolized by intracellular 4-hydroxy-D-proline oxidases.</text>
</comment>
<comment type="catalytic activity">
    <reaction>
        <text>trans-4-hydroxy-L-proline = cis-4-hydroxy-D-proline</text>
        <dbReference type="Rhea" id="RHEA:21152"/>
        <dbReference type="ChEBI" id="CHEBI:57690"/>
        <dbReference type="ChEBI" id="CHEBI:58375"/>
        <dbReference type="EC" id="5.1.1.8"/>
    </reaction>
</comment>
<comment type="subunit">
    <text evidence="1">Homodimer.</text>
</comment>
<comment type="similarity">
    <text evidence="3">Belongs to the proline racemase family.</text>
</comment>
<comment type="sequence caution" evidence="3">
    <conflict type="erroneous initiation">
        <sequence resource="EMBL-CDS" id="ABK10876"/>
    </conflict>
</comment>
<organism>
    <name type="scientific">Burkholderia cenocepacia (strain HI2424)</name>
    <dbReference type="NCBI Taxonomy" id="331272"/>
    <lineage>
        <taxon>Bacteria</taxon>
        <taxon>Pseudomonadati</taxon>
        <taxon>Pseudomonadota</taxon>
        <taxon>Betaproteobacteria</taxon>
        <taxon>Burkholderiales</taxon>
        <taxon>Burkholderiaceae</taxon>
        <taxon>Burkholderia</taxon>
        <taxon>Burkholderia cepacia complex</taxon>
    </lineage>
</organism>
<reference key="1">
    <citation type="submission" date="2006-08" db="EMBL/GenBank/DDBJ databases">
        <title>Complete sequence of chromosome 2 of Burkholderia cenocepacia HI2424.</title>
        <authorList>
            <person name="Copeland A."/>
            <person name="Lucas S."/>
            <person name="Lapidus A."/>
            <person name="Barry K."/>
            <person name="Detter J.C."/>
            <person name="Glavina del Rio T."/>
            <person name="Hammon N."/>
            <person name="Israni S."/>
            <person name="Pitluck S."/>
            <person name="Chain P."/>
            <person name="Malfatti S."/>
            <person name="Shin M."/>
            <person name="Vergez L."/>
            <person name="Schmutz J."/>
            <person name="Larimer F."/>
            <person name="Land M."/>
            <person name="Hauser L."/>
            <person name="Kyrpides N."/>
            <person name="Kim E."/>
            <person name="LiPuma J.J."/>
            <person name="Gonzalez C.F."/>
            <person name="Konstantinidis K."/>
            <person name="Tiedje J.M."/>
            <person name="Richardson P."/>
        </authorList>
    </citation>
    <scope>NUCLEOTIDE SEQUENCE [LARGE SCALE GENOMIC DNA]</scope>
    <source>
        <strain>HI2424</strain>
    </source>
</reference>
<dbReference type="EC" id="5.1.1.8"/>
<dbReference type="EMBL" id="CP000459">
    <property type="protein sequence ID" value="ABK10876.1"/>
    <property type="status" value="ALT_INIT"/>
    <property type="molecule type" value="Genomic_DNA"/>
</dbReference>
<dbReference type="RefSeq" id="WP_063828181.1">
    <property type="nucleotide sequence ID" value="NC_008543.1"/>
</dbReference>
<dbReference type="SMR" id="A0AZQ0"/>
<dbReference type="KEGG" id="bch:Bcen2424_4140"/>
<dbReference type="HOGENOM" id="CLU_036729_1_0_4"/>
<dbReference type="GO" id="GO:0047580">
    <property type="term" value="F:4-hydroxyproline epimerase activity"/>
    <property type="evidence" value="ECO:0007669"/>
    <property type="project" value="UniProtKB-EC"/>
</dbReference>
<dbReference type="FunFam" id="3.10.310.10:FF:000012">
    <property type="entry name" value="4-hydroxyproline 2-epimerase"/>
    <property type="match status" value="1"/>
</dbReference>
<dbReference type="Gene3D" id="3.10.310.10">
    <property type="entry name" value="Diaminopimelate Epimerase, Chain A, domain 1"/>
    <property type="match status" value="2"/>
</dbReference>
<dbReference type="InterPro" id="IPR008794">
    <property type="entry name" value="Pro_racemase_fam"/>
</dbReference>
<dbReference type="NCBIfam" id="NF010577">
    <property type="entry name" value="PRK13970.1"/>
    <property type="match status" value="1"/>
</dbReference>
<dbReference type="PANTHER" id="PTHR33442">
    <property type="entry name" value="TRANS-3-HYDROXY-L-PROLINE DEHYDRATASE"/>
    <property type="match status" value="1"/>
</dbReference>
<dbReference type="PANTHER" id="PTHR33442:SF1">
    <property type="entry name" value="TRANS-3-HYDROXY-L-PROLINE DEHYDRATASE"/>
    <property type="match status" value="1"/>
</dbReference>
<dbReference type="Pfam" id="PF05544">
    <property type="entry name" value="Pro_racemase"/>
    <property type="match status" value="1"/>
</dbReference>
<dbReference type="PIRSF" id="PIRSF029792">
    <property type="entry name" value="Pro_racemase"/>
    <property type="match status" value="1"/>
</dbReference>
<dbReference type="SFLD" id="SFLDS00028">
    <property type="entry name" value="Proline_Racemase"/>
    <property type="match status" value="1"/>
</dbReference>
<dbReference type="SUPFAM" id="SSF54506">
    <property type="entry name" value="Diaminopimelate epimerase-like"/>
    <property type="match status" value="1"/>
</dbReference>
<sequence>MKRIQIIDSHTGGEPTRLVVSGFPSLGRGTMAERRDVLAREHDRYRTACILEPRGSDVMVGALLCDPVAPDAAAGVIFFNNSGYLGMCGHGTIGVVRTLHHMGRIEPGVHRIETPVGTVEATLHDDLSVSVRNVPAYRHAQGVVLDVPGYGPVKGDIAWGGNWFFLISDHGQRVAGDNVAALTAYASAVREGLERAGITGANGGEIDHIELFADDPEHDSRSFVLCPGLAYDRSPCGTGTSAKLACLAADGKLAPGVVWRQASVIGSVFHASYELADGGIVPTIRGSAHLSAEATLLIDEDDPFGWGIGS</sequence>
<name>4HYPE_BURCH</name>
<protein>
    <recommendedName>
        <fullName>4-hydroxyproline epimerase</fullName>
        <ecNumber>5.1.1.8</ecNumber>
    </recommendedName>
    <alternativeName>
        <fullName>Hydroxyproline-2-epimerase</fullName>
        <shortName>HyPRE</shortName>
    </alternativeName>
</protein>
<gene>
    <name type="ordered locus">Bcen2424_4140</name>
</gene>
<feature type="chain" id="PRO_0000354033" description="4-hydroxyproline epimerase">
    <location>
        <begin position="1"/>
        <end position="310"/>
    </location>
</feature>
<feature type="active site" description="Proton acceptor" evidence="2">
    <location>
        <position position="88"/>
    </location>
</feature>
<feature type="active site" description="Proton donor" evidence="2">
    <location>
        <position position="236"/>
    </location>
</feature>
<feature type="binding site" evidence="2">
    <location>
        <begin position="89"/>
        <end position="90"/>
    </location>
    <ligand>
        <name>substrate</name>
    </ligand>
</feature>
<feature type="binding site" evidence="2">
    <location>
        <position position="208"/>
    </location>
    <ligand>
        <name>substrate</name>
    </ligand>
</feature>
<feature type="binding site" evidence="2">
    <location>
        <position position="232"/>
    </location>
    <ligand>
        <name>substrate</name>
    </ligand>
</feature>
<feature type="binding site" evidence="2">
    <location>
        <begin position="237"/>
        <end position="238"/>
    </location>
    <ligand>
        <name>substrate</name>
    </ligand>
</feature>